<accession>Q1CCT0</accession>
<accession>D1Q2N5</accession>
<gene>
    <name evidence="1" type="primary">slyX</name>
    <name type="ordered locus">YPN_3873</name>
    <name type="ORF">YP516_4398</name>
</gene>
<protein>
    <recommendedName>
        <fullName evidence="1">Protein SlyX</fullName>
    </recommendedName>
</protein>
<dbReference type="EMBL" id="CP000305">
    <property type="protein sequence ID" value="ABG20200.1"/>
    <property type="molecule type" value="Genomic_DNA"/>
</dbReference>
<dbReference type="EMBL" id="ACNQ01000019">
    <property type="protein sequence ID" value="EEO74788.1"/>
    <property type="molecule type" value="Genomic_DNA"/>
</dbReference>
<dbReference type="RefSeq" id="WP_002212317.1">
    <property type="nucleotide sequence ID" value="NZ_ACNQ01000019.1"/>
</dbReference>
<dbReference type="SMR" id="Q1CCT0"/>
<dbReference type="KEGG" id="ypn:YPN_3873"/>
<dbReference type="HOGENOM" id="CLU_180796_4_2_6"/>
<dbReference type="Proteomes" id="UP000008936">
    <property type="component" value="Chromosome"/>
</dbReference>
<dbReference type="Gene3D" id="1.20.5.300">
    <property type="match status" value="1"/>
</dbReference>
<dbReference type="HAMAP" id="MF_00715">
    <property type="entry name" value="SlyX"/>
    <property type="match status" value="1"/>
</dbReference>
<dbReference type="InterPro" id="IPR007236">
    <property type="entry name" value="SlyX"/>
</dbReference>
<dbReference type="NCBIfam" id="NF002750">
    <property type="entry name" value="PRK02793.1"/>
    <property type="match status" value="1"/>
</dbReference>
<dbReference type="PANTHER" id="PTHR36508">
    <property type="entry name" value="PROTEIN SLYX"/>
    <property type="match status" value="1"/>
</dbReference>
<dbReference type="PANTHER" id="PTHR36508:SF1">
    <property type="entry name" value="PROTEIN SLYX"/>
    <property type="match status" value="1"/>
</dbReference>
<dbReference type="Pfam" id="PF04102">
    <property type="entry name" value="SlyX"/>
    <property type="match status" value="1"/>
</dbReference>
<evidence type="ECO:0000255" key="1">
    <source>
        <dbReference type="HAMAP-Rule" id="MF_00715"/>
    </source>
</evidence>
<evidence type="ECO:0000256" key="2">
    <source>
        <dbReference type="SAM" id="MobiDB-lite"/>
    </source>
</evidence>
<name>SLYX_YERPN</name>
<organism>
    <name type="scientific">Yersinia pestis bv. Antiqua (strain Nepal516)</name>
    <dbReference type="NCBI Taxonomy" id="377628"/>
    <lineage>
        <taxon>Bacteria</taxon>
        <taxon>Pseudomonadati</taxon>
        <taxon>Pseudomonadota</taxon>
        <taxon>Gammaproteobacteria</taxon>
        <taxon>Enterobacterales</taxon>
        <taxon>Yersiniaceae</taxon>
        <taxon>Yersinia</taxon>
    </lineage>
</organism>
<sequence length="72" mass="8523">MEQSLLEQRLEMLESRLAFQEVTIEELNLIVTEHQMEMTKLREHLRLLTDKLRESQSSMLASPSEETPPPHY</sequence>
<feature type="chain" id="PRO_1000045749" description="Protein SlyX">
    <location>
        <begin position="1"/>
        <end position="72"/>
    </location>
</feature>
<feature type="region of interest" description="Disordered" evidence="2">
    <location>
        <begin position="52"/>
        <end position="72"/>
    </location>
</feature>
<feature type="compositionally biased region" description="Polar residues" evidence="2">
    <location>
        <begin position="55"/>
        <end position="65"/>
    </location>
</feature>
<comment type="similarity">
    <text evidence="1">Belongs to the SlyX family.</text>
</comment>
<proteinExistence type="inferred from homology"/>
<reference key="1">
    <citation type="journal article" date="2006" name="J. Bacteriol.">
        <title>Complete genome sequence of Yersinia pestis strains Antiqua and Nepal516: evidence of gene reduction in an emerging pathogen.</title>
        <authorList>
            <person name="Chain P.S.G."/>
            <person name="Hu P."/>
            <person name="Malfatti S.A."/>
            <person name="Radnedge L."/>
            <person name="Larimer F."/>
            <person name="Vergez L.M."/>
            <person name="Worsham P."/>
            <person name="Chu M.C."/>
            <person name="Andersen G.L."/>
        </authorList>
    </citation>
    <scope>NUCLEOTIDE SEQUENCE [LARGE SCALE GENOMIC DNA]</scope>
    <source>
        <strain>Nepal516</strain>
    </source>
</reference>
<reference key="2">
    <citation type="submission" date="2009-04" db="EMBL/GenBank/DDBJ databases">
        <title>Yersinia pestis Nepal516A whole genome shotgun sequencing project.</title>
        <authorList>
            <person name="Plunkett G. III"/>
            <person name="Anderson B.D."/>
            <person name="Baumler D.J."/>
            <person name="Burland V."/>
            <person name="Cabot E.L."/>
            <person name="Glasner J.D."/>
            <person name="Mau B."/>
            <person name="Neeno-Eckwall E."/>
            <person name="Perna N.T."/>
            <person name="Munk A.C."/>
            <person name="Tapia R."/>
            <person name="Green L.D."/>
            <person name="Rogers Y.C."/>
            <person name="Detter J.C."/>
            <person name="Bruce D.C."/>
            <person name="Brettin T.S."/>
        </authorList>
    </citation>
    <scope>NUCLEOTIDE SEQUENCE [LARGE SCALE GENOMIC DNA]</scope>
    <source>
        <strain>Nepal516</strain>
    </source>
</reference>